<comment type="function">
    <text evidence="4">Probable neurotoxin.</text>
</comment>
<comment type="subcellular location">
    <subcellularLocation>
        <location evidence="5">Secreted</location>
    </subcellularLocation>
</comment>
<comment type="tissue specificity">
    <text evidence="5">Expressed by the venom duct.</text>
</comment>
<comment type="domain">
    <text>The cysteine framework is XI (C-C-CC-CC-C-C).</text>
</comment>
<comment type="miscellaneous">
    <text evidence="4">The mature protein is identical to the Conus imperialis toxin AC A0A125S9E2.</text>
</comment>
<comment type="similarity">
    <text evidence="4">Belongs to the conotoxin I2 superfamily.</text>
</comment>
<organism>
    <name type="scientific">Conus litteratus</name>
    <name type="common">Lettered cone</name>
    <dbReference type="NCBI Taxonomy" id="89445"/>
    <lineage>
        <taxon>Eukaryota</taxon>
        <taxon>Metazoa</taxon>
        <taxon>Spiralia</taxon>
        <taxon>Lophotrochozoa</taxon>
        <taxon>Mollusca</taxon>
        <taxon>Gastropoda</taxon>
        <taxon>Caenogastropoda</taxon>
        <taxon>Neogastropoda</taxon>
        <taxon>Conoidea</taxon>
        <taxon>Conidae</taxon>
        <taxon>Conus</taxon>
        <taxon>Elisaconus</taxon>
    </lineage>
</organism>
<proteinExistence type="inferred from homology"/>
<keyword id="KW-0027">Amidation</keyword>
<keyword id="KW-0165">Cleavage on pair of basic residues</keyword>
<keyword id="KW-1015">Disulfide bond</keyword>
<keyword id="KW-0528">Neurotoxin</keyword>
<keyword id="KW-0964">Secreted</keyword>
<keyword id="KW-0732">Signal</keyword>
<keyword id="KW-0800">Toxin</keyword>
<protein>
    <recommendedName>
        <fullName evidence="3">Conotoxin Lt11.3</fullName>
    </recommendedName>
</protein>
<evidence type="ECO:0000250" key="1"/>
<evidence type="ECO:0000250" key="2">
    <source>
        <dbReference type="UniProtKB" id="Q7Z094"/>
    </source>
</evidence>
<evidence type="ECO:0000303" key="3">
    <source>
    </source>
</evidence>
<evidence type="ECO:0000305" key="4"/>
<evidence type="ECO:0000305" key="5">
    <source>
    </source>
</evidence>
<reference key="1">
    <citation type="journal article" date="2009" name="Peptides">
        <title>Identification of novel I-superfamily conopeptides from several clades of Conus species found in the South China Sea.</title>
        <authorList>
            <person name="Liu Z."/>
            <person name="Xu N."/>
            <person name="Hu J."/>
            <person name="Zhao C."/>
            <person name="Yu Z."/>
            <person name="Dai Q."/>
        </authorList>
    </citation>
    <scope>NUCLEOTIDE SEQUENCE [MRNA]</scope>
    <source>
        <tissue>Venom duct</tissue>
    </source>
</reference>
<feature type="signal peptide" evidence="1">
    <location>
        <begin position="1"/>
        <end position="26"/>
    </location>
</feature>
<feature type="peptide" id="PRO_0000392037" description="Conotoxin Lt11.3">
    <location>
        <begin position="27"/>
        <end position="57"/>
    </location>
</feature>
<feature type="propeptide" id="PRO_0000392038" evidence="1">
    <location>
        <begin position="61"/>
        <end position="71"/>
    </location>
</feature>
<feature type="modified residue" description="Proline amide" evidence="1">
    <location>
        <position position="57"/>
    </location>
</feature>
<feature type="disulfide bond" evidence="2">
    <location>
        <begin position="27"/>
        <end position="41"/>
    </location>
</feature>
<feature type="disulfide bond" evidence="2">
    <location>
        <begin position="34"/>
        <end position="46"/>
    </location>
</feature>
<feature type="disulfide bond" evidence="2">
    <location>
        <begin position="40"/>
        <end position="50"/>
    </location>
</feature>
<feature type="disulfide bond" evidence="2">
    <location>
        <begin position="45"/>
        <end position="54"/>
    </location>
</feature>
<dbReference type="EMBL" id="GQ184576">
    <property type="protein sequence ID" value="ACU30733.1"/>
    <property type="molecule type" value="mRNA"/>
</dbReference>
<dbReference type="SMR" id="C7DQX6"/>
<dbReference type="GO" id="GO:0005576">
    <property type="term" value="C:extracellular region"/>
    <property type="evidence" value="ECO:0007669"/>
    <property type="project" value="UniProtKB-SubCell"/>
</dbReference>
<dbReference type="GO" id="GO:0090729">
    <property type="term" value="F:toxin activity"/>
    <property type="evidence" value="ECO:0007669"/>
    <property type="project" value="UniProtKB-KW"/>
</dbReference>
<dbReference type="InterPro" id="IPR013141">
    <property type="entry name" value="Conotoxin-I_CS"/>
</dbReference>
<dbReference type="InterPro" id="IPR020242">
    <property type="entry name" value="Conotoxin_I2"/>
</dbReference>
<dbReference type="Pfam" id="PF17557">
    <property type="entry name" value="Conotoxin_I2"/>
    <property type="match status" value="1"/>
</dbReference>
<dbReference type="PROSITE" id="PS60019">
    <property type="entry name" value="I_CONOTOXIN"/>
    <property type="match status" value="1"/>
</dbReference>
<sequence>MMFRLTSVGCILLVIAFLNLVGLTNACTSEGYSCSSDSNCCKNVCCWNVCESHCRHPGKRTRLQGFFKHRR</sequence>
<name>I2B3_CONLT</name>
<accession>C7DQX6</accession>